<name>H2U01_CYRHA</name>
<protein>
    <recommendedName>
        <fullName>U4-theraphotoxin-Hhn1m</fullName>
        <shortName>U4-TRTX-Hhn1m</shortName>
    </recommendedName>
    <alternativeName>
        <fullName>Hainantoxin-II-21</fullName>
        <shortName>HNTX-II-21</shortName>
    </alternativeName>
</protein>
<reference key="1">
    <citation type="journal article" date="2010" name="J. Proteome Res.">
        <title>Molecular diversification of peptide toxins from the tarantula Haplopelma hainanum (Ornithoctonus hainana) venom based on transcriptomic, peptidomic, and genomic analyses.</title>
        <authorList>
            <person name="Tang X."/>
            <person name="Zhang Y."/>
            <person name="Hu W."/>
            <person name="Xu D."/>
            <person name="Tao H."/>
            <person name="Yang X."/>
            <person name="Li Y."/>
            <person name="Jiang L."/>
            <person name="Liang S."/>
        </authorList>
    </citation>
    <scope>NUCLEOTIDE SEQUENCE [LARGE SCALE GENOMIC DNA]</scope>
    <source>
        <tissue>Venom gland</tissue>
    </source>
</reference>
<evidence type="ECO:0000250" key="1"/>
<evidence type="ECO:0000255" key="2"/>
<evidence type="ECO:0000305" key="3"/>
<accession>D2Y2J4</accession>
<dbReference type="EMBL" id="GU293071">
    <property type="protein sequence ID" value="ADB56887.1"/>
    <property type="molecule type" value="Genomic_DNA"/>
</dbReference>
<dbReference type="SMR" id="D2Y2J4"/>
<dbReference type="ArachnoServer" id="AS002066">
    <property type="toxin name" value="U4-theraphotoxin-Hhn1m"/>
</dbReference>
<dbReference type="GO" id="GO:0005576">
    <property type="term" value="C:extracellular region"/>
    <property type="evidence" value="ECO:0007669"/>
    <property type="project" value="UniProtKB-SubCell"/>
</dbReference>
<dbReference type="GO" id="GO:0035792">
    <property type="term" value="C:host cell postsynaptic membrane"/>
    <property type="evidence" value="ECO:0007669"/>
    <property type="project" value="UniProtKB-KW"/>
</dbReference>
<dbReference type="GO" id="GO:0090729">
    <property type="term" value="F:toxin activity"/>
    <property type="evidence" value="ECO:0007669"/>
    <property type="project" value="UniProtKB-KW"/>
</dbReference>
<dbReference type="InterPro" id="IPR012625">
    <property type="entry name" value="Hwtx-2-like"/>
</dbReference>
<dbReference type="Pfam" id="PF08089">
    <property type="entry name" value="Toxin_20"/>
    <property type="match status" value="1"/>
</dbReference>
<dbReference type="SUPFAM" id="SSF57059">
    <property type="entry name" value="omega toxin-like"/>
    <property type="match status" value="1"/>
</dbReference>
<dbReference type="PROSITE" id="PS60022">
    <property type="entry name" value="HWTX_2"/>
    <property type="match status" value="1"/>
</dbReference>
<organism>
    <name type="scientific">Cyriopagopus hainanus</name>
    <name type="common">Chinese bird spider</name>
    <name type="synonym">Haplopelma hainanum</name>
    <dbReference type="NCBI Taxonomy" id="209901"/>
    <lineage>
        <taxon>Eukaryota</taxon>
        <taxon>Metazoa</taxon>
        <taxon>Ecdysozoa</taxon>
        <taxon>Arthropoda</taxon>
        <taxon>Chelicerata</taxon>
        <taxon>Arachnida</taxon>
        <taxon>Araneae</taxon>
        <taxon>Mygalomorphae</taxon>
        <taxon>Theraphosidae</taxon>
        <taxon>Haplopelma</taxon>
    </lineage>
</organism>
<comment type="function">
    <text evidence="1">Postsynaptic neurotoxin.</text>
</comment>
<comment type="subcellular location">
    <subcellularLocation>
        <location evidence="1">Secreted</location>
    </subcellularLocation>
</comment>
<comment type="tissue specificity">
    <text>Expressed by the venom gland.</text>
</comment>
<comment type="similarity">
    <text evidence="3">Belongs to the neurotoxin 12 (Hwtx-2) family. 02 (Hwtx-2) subfamily.</text>
</comment>
<sequence length="85" mass="9400">MKVTLIAILTCAAVLVLHTTAAEELEAESQLVEVGMPDTELAAVDEERFFECSVSCEIEKEGNKDCKKKKCKGGWKCKFNMCVKV</sequence>
<keyword id="KW-1015">Disulfide bond</keyword>
<keyword id="KW-0528">Neurotoxin</keyword>
<keyword id="KW-0629">Postsynaptic neurotoxin</keyword>
<keyword id="KW-0964">Secreted</keyword>
<keyword id="KW-0732">Signal</keyword>
<keyword id="KW-0800">Toxin</keyword>
<proteinExistence type="inferred from homology"/>
<feature type="signal peptide" evidence="2">
    <location>
        <begin position="1"/>
        <end position="22"/>
    </location>
</feature>
<feature type="propeptide" id="PRO_0000400809" evidence="1">
    <location>
        <begin position="23"/>
        <end position="48"/>
    </location>
</feature>
<feature type="peptide" id="PRO_0000400810" description="U4-theraphotoxin-Hhn1m">
    <location>
        <begin position="49"/>
        <end position="85"/>
    </location>
</feature>
<feature type="disulfide bond" evidence="1">
    <location>
        <begin position="52"/>
        <end position="66"/>
    </location>
</feature>
<feature type="disulfide bond" evidence="1">
    <location>
        <begin position="56"/>
        <end position="77"/>
    </location>
</feature>
<feature type="disulfide bond" evidence="1">
    <location>
        <begin position="71"/>
        <end position="82"/>
    </location>
</feature>